<reference key="1">
    <citation type="journal article" date="2013" name="Fukuoka Univ. Sci. Rep.">
        <title>Characterization of brevilysin H2, an alpha-fibrinogenolytic metalloproteinase from the venom of Chinese snake (Gloydius blomhoffi brevicaudus).</title>
        <authorList>
            <person name="Terada S."/>
            <person name="Hattori T."/>
        </authorList>
    </citation>
    <scope>PROTEIN SEQUENCE</scope>
    <scope>FUNCTION</scope>
    <scope>CATALYTIC ACTIVITY</scope>
    <scope>ACTIVITY REGULATION</scope>
    <scope>GLYCOSYLATION AT ASN-69 AND ASN-185</scope>
    <scope>PYROGLUTAMATE FORMATION AT GLN-1</scope>
    <source>
        <tissue>Venom</tissue>
    </source>
</reference>
<comment type="function">
    <text evidence="6">Non-hemorrhagic metalloproteinase that degrades fibrinogen. The alpha chain (FGA) is rapidly degraded, the beta chain (FGB) is degraded very slowly, while the gamma chain is left intact. Shows a prefential cleavage at X-Leu bonds. Cleaves insulin B chain at '29-His-|-Leu-30', '33-Ser-|-His-34', '38-Ala-|-Leu-39' and '40-Tyr-|-Leu-41' bonds.</text>
</comment>
<comment type="cofactor">
    <cofactor evidence="1">
        <name>Zn(2+)</name>
        <dbReference type="ChEBI" id="CHEBI:29105"/>
    </cofactor>
    <text evidence="1">Binds 1 zinc ion per subunit.</text>
</comment>
<comment type="activity regulation">
    <text evidence="6">Its proteolytic activity is inhibited by EDTA, TPEN, 1,10-phenanthroline, and some thiol compounds, but is enhanced by alkaline earth metal ions (Mg2+, Ca2+, Sr2+, and Ba2+). Its activity is not modulated by urea (4 M).</text>
</comment>
<comment type="biophysicochemical properties">
    <phDependence>
        <text>Optimum pH is 9.5.</text>
    </phDependence>
</comment>
<comment type="subunit">
    <text evidence="1">Monomer.</text>
</comment>
<comment type="subcellular location">
    <subcellularLocation>
        <location>Secreted</location>
    </subcellularLocation>
</comment>
<comment type="tissue specificity">
    <text>Expressed by the venom gland.</text>
</comment>
<comment type="PTM">
    <text evidence="6">Glycosylated (Ref.1).</text>
</comment>
<comment type="miscellaneous">
    <text>Negative results: does not show hemorrhagic activity (Ref.1).</text>
</comment>
<comment type="miscellaneous">
    <text>The disintegrin domain belongs to the long disintegrin subfamily.</text>
</comment>
<comment type="similarity">
    <text evidence="7">Belongs to the venom metalloproteinase (M12B) family. P-III subfamily. P-IIIa sub-subfamily.</text>
</comment>
<proteinExistence type="evidence at protein level"/>
<feature type="chain" id="PRO_0000424620" description="Zinc metalloproteinase-disintegrin-like brevilysin H2a">
    <location>
        <begin position="1"/>
        <end position="424"/>
    </location>
</feature>
<feature type="domain" description="Peptidase M12B" evidence="4">
    <location>
        <begin position="9"/>
        <end position="207"/>
    </location>
</feature>
<feature type="domain" description="Disintegrin" evidence="3">
    <location>
        <begin position="215"/>
        <end position="301"/>
    </location>
</feature>
<feature type="short sequence motif" description="D/ECD-tripeptide">
    <location>
        <begin position="279"/>
        <end position="281"/>
    </location>
</feature>
<feature type="active site" evidence="4 5">
    <location>
        <position position="146"/>
    </location>
</feature>
<feature type="binding site" evidence="1">
    <location>
        <position position="96"/>
    </location>
    <ligand>
        <name>Ca(2+)</name>
        <dbReference type="ChEBI" id="CHEBI:29108"/>
        <label>1</label>
    </ligand>
</feature>
<feature type="binding site" evidence="1">
    <location>
        <position position="145"/>
    </location>
    <ligand>
        <name>Zn(2+)</name>
        <dbReference type="ChEBI" id="CHEBI:29105"/>
        <note>catalytic</note>
    </ligand>
</feature>
<feature type="binding site" evidence="1">
    <location>
        <position position="149"/>
    </location>
    <ligand>
        <name>Zn(2+)</name>
        <dbReference type="ChEBI" id="CHEBI:29105"/>
        <note>catalytic</note>
    </ligand>
</feature>
<feature type="binding site" evidence="1">
    <location>
        <position position="155"/>
    </location>
    <ligand>
        <name>Zn(2+)</name>
        <dbReference type="ChEBI" id="CHEBI:29105"/>
        <note>catalytic</note>
    </ligand>
</feature>
<feature type="binding site" evidence="1">
    <location>
        <position position="202"/>
    </location>
    <ligand>
        <name>Ca(2+)</name>
        <dbReference type="ChEBI" id="CHEBI:29108"/>
        <label>1</label>
    </ligand>
</feature>
<feature type="binding site" evidence="1">
    <location>
        <position position="205"/>
    </location>
    <ligand>
        <name>Ca(2+)</name>
        <dbReference type="ChEBI" id="CHEBI:29108"/>
        <label>1</label>
    </ligand>
</feature>
<feature type="binding site" evidence="1">
    <location>
        <position position="217"/>
    </location>
    <ligand>
        <name>Ca(2+)</name>
        <dbReference type="ChEBI" id="CHEBI:29108"/>
        <label>2</label>
    </ligand>
</feature>
<feature type="binding site" evidence="1">
    <location>
        <position position="220"/>
    </location>
    <ligand>
        <name>Ca(2+)</name>
        <dbReference type="ChEBI" id="CHEBI:29108"/>
        <label>2</label>
    </ligand>
</feature>
<feature type="binding site" evidence="1">
    <location>
        <position position="222"/>
    </location>
    <ligand>
        <name>Ca(2+)</name>
        <dbReference type="ChEBI" id="CHEBI:29108"/>
        <label>2</label>
    </ligand>
</feature>
<feature type="binding site" evidence="1">
    <location>
        <position position="224"/>
    </location>
    <ligand>
        <name>Ca(2+)</name>
        <dbReference type="ChEBI" id="CHEBI:29108"/>
        <label>2</label>
    </ligand>
</feature>
<feature type="binding site" evidence="1">
    <location>
        <position position="227"/>
    </location>
    <ligand>
        <name>Ca(2+)</name>
        <dbReference type="ChEBI" id="CHEBI:29108"/>
        <label>2</label>
    </ligand>
</feature>
<feature type="binding site" evidence="1">
    <location>
        <position position="230"/>
    </location>
    <ligand>
        <name>Ca(2+)</name>
        <dbReference type="ChEBI" id="CHEBI:29108"/>
        <label>2</label>
    </ligand>
</feature>
<feature type="binding site" evidence="1">
    <location>
        <position position="281"/>
    </location>
    <ligand>
        <name>Ca(2+)</name>
        <dbReference type="ChEBI" id="CHEBI:29108"/>
        <label>3</label>
    </ligand>
</feature>
<feature type="binding site" evidence="1">
    <location>
        <position position="284"/>
    </location>
    <ligand>
        <name>Ca(2+)</name>
        <dbReference type="ChEBI" id="CHEBI:29108"/>
        <label>3</label>
    </ligand>
</feature>
<feature type="binding site" evidence="1">
    <location>
        <position position="296"/>
    </location>
    <ligand>
        <name>Ca(2+)</name>
        <dbReference type="ChEBI" id="CHEBI:29108"/>
        <label>3</label>
    </ligand>
</feature>
<feature type="modified residue" description="Pyrrolidone carboxylic acid" evidence="6">
    <location>
        <position position="1"/>
    </location>
</feature>
<feature type="glycosylation site" description="N-linked (GlcNAc...) asparagine" evidence="6">
    <location>
        <position position="69"/>
    </location>
</feature>
<feature type="glycosylation site" description="N-linked (GlcNAc...) asparagine" evidence="6">
    <location>
        <position position="185"/>
    </location>
</feature>
<feature type="glycosylation site" description="N-linked (GlcNAc...) asparagine" evidence="2">
    <location>
        <position position="331"/>
    </location>
</feature>
<feature type="disulfide bond" evidence="1">
    <location>
        <begin position="120"/>
        <end position="202"/>
    </location>
</feature>
<feature type="disulfide bond" evidence="1">
    <location>
        <begin position="164"/>
        <end position="186"/>
    </location>
</feature>
<feature type="disulfide bond" evidence="1">
    <location>
        <begin position="166"/>
        <end position="169"/>
    </location>
</feature>
<feature type="disulfide bond" evidence="1">
    <location>
        <begin position="218"/>
        <end position="247"/>
    </location>
</feature>
<feature type="disulfide bond" evidence="1">
    <location>
        <begin position="229"/>
        <end position="242"/>
    </location>
</feature>
<feature type="disulfide bond" evidence="1">
    <location>
        <begin position="231"/>
        <end position="237"/>
    </location>
</feature>
<feature type="disulfide bond" evidence="1">
    <location>
        <begin position="241"/>
        <end position="264"/>
    </location>
</feature>
<feature type="disulfide bond" evidence="1">
    <location>
        <begin position="255"/>
        <end position="261"/>
    </location>
</feature>
<feature type="disulfide bond" evidence="1">
    <location>
        <begin position="260"/>
        <end position="286"/>
    </location>
</feature>
<feature type="disulfide bond" evidence="1">
    <location>
        <begin position="273"/>
        <end position="293"/>
    </location>
</feature>
<feature type="disulfide bond" evidence="1">
    <location>
        <begin position="280"/>
        <end position="312"/>
    </location>
</feature>
<feature type="disulfide bond" evidence="1">
    <location>
        <begin position="305"/>
        <end position="317"/>
    </location>
</feature>
<feature type="disulfide bond" evidence="1">
    <location>
        <begin position="324"/>
        <end position="374"/>
    </location>
</feature>
<feature type="disulfide bond" evidence="1">
    <location>
        <begin position="339"/>
        <end position="385"/>
    </location>
</feature>
<feature type="disulfide bond" evidence="1">
    <location>
        <begin position="352"/>
        <end position="362"/>
    </location>
</feature>
<feature type="disulfide bond" evidence="1">
    <location>
        <begin position="369"/>
        <end position="411"/>
    </location>
</feature>
<feature type="disulfide bond" evidence="1">
    <location>
        <begin position="405"/>
        <end position="417"/>
    </location>
</feature>
<feature type="unsure residue" description="Assigned by comparison with orthologs">
    <location>
        <position position="69"/>
    </location>
</feature>
<feature type="unsure residue" description="Assigned by comparison with orthologs">
    <location>
        <position position="185"/>
    </location>
</feature>
<protein>
    <recommendedName>
        <fullName>Zinc metalloproteinase-disintegrin-like brevilysin H2a</fullName>
        <ecNumber>3.4.24.-</ecNumber>
    </recommendedName>
    <alternativeName>
        <fullName>Snake venom metalloproteinase</fullName>
        <shortName>SVMP</shortName>
    </alternativeName>
</protein>
<name>VM32A_GLOBR</name>
<sequence>QQRYLNAKRYVKLAIVADRSMVTKHNGKLKKLRKWIYRIVNTINEVYRSLNILVALVYLEIWSKEDLINVTSAAKDTLASFGNWRATDLLKRRSHDAAHLLTNIKFDGTTVGKAYVASMCQQDSSVGINQDHSKINLLVALTMAHELGHNLGMSHDVVNTEKQCNCGTCVMAPTISDQISKLFSNCSKNDYENFLTLYKPQCILNEPSKTDIVSPPVCGNELLEVGEECDCGSPETCQNPCCDAATCKLTSGSQCAKGLCCDQCKFSKSGTECRAAKDDCDIAESCTGQSADCPTDDLQRNGKPCQNNAGYCYNGKCPIMLNQCISFYGSNATVAPDICFNYNLKGEGNFYCRKEQATIFPCAQKDKKCGRLFCVLGPTGKRISCKNTYSEDDPNYGMVDLGTKCEDGKVCNSNRECVDVNTAY</sequence>
<dbReference type="EC" id="3.4.24.-"/>
<dbReference type="SMR" id="P0DM89"/>
<dbReference type="GO" id="GO:0005576">
    <property type="term" value="C:extracellular region"/>
    <property type="evidence" value="ECO:0007669"/>
    <property type="project" value="UniProtKB-SubCell"/>
</dbReference>
<dbReference type="GO" id="GO:0005886">
    <property type="term" value="C:plasma membrane"/>
    <property type="evidence" value="ECO:0007669"/>
    <property type="project" value="TreeGrafter"/>
</dbReference>
<dbReference type="GO" id="GO:0046872">
    <property type="term" value="F:metal ion binding"/>
    <property type="evidence" value="ECO:0007669"/>
    <property type="project" value="UniProtKB-KW"/>
</dbReference>
<dbReference type="GO" id="GO:0004222">
    <property type="term" value="F:metalloendopeptidase activity"/>
    <property type="evidence" value="ECO:0007669"/>
    <property type="project" value="InterPro"/>
</dbReference>
<dbReference type="GO" id="GO:0090729">
    <property type="term" value="F:toxin activity"/>
    <property type="evidence" value="ECO:0007669"/>
    <property type="project" value="UniProtKB-KW"/>
</dbReference>
<dbReference type="GO" id="GO:0006508">
    <property type="term" value="P:proteolysis"/>
    <property type="evidence" value="ECO:0007669"/>
    <property type="project" value="InterPro"/>
</dbReference>
<dbReference type="CDD" id="cd04269">
    <property type="entry name" value="ZnMc_adamalysin_II_like"/>
    <property type="match status" value="1"/>
</dbReference>
<dbReference type="FunFam" id="3.40.390.10:FF:000002">
    <property type="entry name" value="Disintegrin and metalloproteinase domain-containing protein 22"/>
    <property type="match status" value="1"/>
</dbReference>
<dbReference type="FunFam" id="4.10.70.10:FF:000001">
    <property type="entry name" value="Disintegrin and metalloproteinase domain-containing protein 22"/>
    <property type="match status" value="1"/>
</dbReference>
<dbReference type="Gene3D" id="3.40.390.10">
    <property type="entry name" value="Collagenase (Catalytic Domain)"/>
    <property type="match status" value="1"/>
</dbReference>
<dbReference type="Gene3D" id="4.10.70.10">
    <property type="entry name" value="Disintegrin domain"/>
    <property type="match status" value="1"/>
</dbReference>
<dbReference type="InterPro" id="IPR006586">
    <property type="entry name" value="ADAM_Cys-rich"/>
</dbReference>
<dbReference type="InterPro" id="IPR018358">
    <property type="entry name" value="Disintegrin_CS"/>
</dbReference>
<dbReference type="InterPro" id="IPR001762">
    <property type="entry name" value="Disintegrin_dom"/>
</dbReference>
<dbReference type="InterPro" id="IPR036436">
    <property type="entry name" value="Disintegrin_dom_sf"/>
</dbReference>
<dbReference type="InterPro" id="IPR024079">
    <property type="entry name" value="MetalloPept_cat_dom_sf"/>
</dbReference>
<dbReference type="InterPro" id="IPR001590">
    <property type="entry name" value="Peptidase_M12B"/>
</dbReference>
<dbReference type="InterPro" id="IPR034027">
    <property type="entry name" value="Reprolysin_adamalysin"/>
</dbReference>
<dbReference type="PANTHER" id="PTHR11905">
    <property type="entry name" value="ADAM A DISINTEGRIN AND METALLOPROTEASE DOMAIN"/>
    <property type="match status" value="1"/>
</dbReference>
<dbReference type="PANTHER" id="PTHR11905:SF32">
    <property type="entry name" value="DISINTEGRIN AND METALLOPROTEINASE DOMAIN-CONTAINING PROTEIN 28"/>
    <property type="match status" value="1"/>
</dbReference>
<dbReference type="Pfam" id="PF08516">
    <property type="entry name" value="ADAM_CR"/>
    <property type="match status" value="1"/>
</dbReference>
<dbReference type="Pfam" id="PF00200">
    <property type="entry name" value="Disintegrin"/>
    <property type="match status" value="1"/>
</dbReference>
<dbReference type="Pfam" id="PF01421">
    <property type="entry name" value="Reprolysin"/>
    <property type="match status" value="1"/>
</dbReference>
<dbReference type="PRINTS" id="PR00289">
    <property type="entry name" value="DISINTEGRIN"/>
</dbReference>
<dbReference type="SMART" id="SM00608">
    <property type="entry name" value="ACR"/>
    <property type="match status" value="1"/>
</dbReference>
<dbReference type="SMART" id="SM00050">
    <property type="entry name" value="DISIN"/>
    <property type="match status" value="1"/>
</dbReference>
<dbReference type="SUPFAM" id="SSF57552">
    <property type="entry name" value="Blood coagulation inhibitor (disintegrin)"/>
    <property type="match status" value="1"/>
</dbReference>
<dbReference type="SUPFAM" id="SSF55486">
    <property type="entry name" value="Metalloproteases ('zincins'), catalytic domain"/>
    <property type="match status" value="1"/>
</dbReference>
<dbReference type="PROSITE" id="PS50215">
    <property type="entry name" value="ADAM_MEPRO"/>
    <property type="match status" value="1"/>
</dbReference>
<dbReference type="PROSITE" id="PS00427">
    <property type="entry name" value="DISINTEGRIN_1"/>
    <property type="match status" value="1"/>
</dbReference>
<dbReference type="PROSITE" id="PS50214">
    <property type="entry name" value="DISINTEGRIN_2"/>
    <property type="match status" value="1"/>
</dbReference>
<dbReference type="PROSITE" id="PS00142">
    <property type="entry name" value="ZINC_PROTEASE"/>
    <property type="match status" value="1"/>
</dbReference>
<evidence type="ECO:0000250" key="1"/>
<evidence type="ECO:0000255" key="2"/>
<evidence type="ECO:0000255" key="3">
    <source>
        <dbReference type="PROSITE-ProRule" id="PRU00068"/>
    </source>
</evidence>
<evidence type="ECO:0000255" key="4">
    <source>
        <dbReference type="PROSITE-ProRule" id="PRU00276"/>
    </source>
</evidence>
<evidence type="ECO:0000255" key="5">
    <source>
        <dbReference type="PROSITE-ProRule" id="PRU10095"/>
    </source>
</evidence>
<evidence type="ECO:0000269" key="6">
    <source ref="1"/>
</evidence>
<evidence type="ECO:0000305" key="7"/>
<accession>P0DM89</accession>
<organism>
    <name type="scientific">Gloydius brevicauda</name>
    <name type="common">Korean slamosa snake</name>
    <name type="synonym">Agkistrodon halys brevicaudus</name>
    <dbReference type="NCBI Taxonomy" id="3148161"/>
    <lineage>
        <taxon>Eukaryota</taxon>
        <taxon>Metazoa</taxon>
        <taxon>Chordata</taxon>
        <taxon>Craniata</taxon>
        <taxon>Vertebrata</taxon>
        <taxon>Euteleostomi</taxon>
        <taxon>Lepidosauria</taxon>
        <taxon>Squamata</taxon>
        <taxon>Bifurcata</taxon>
        <taxon>Unidentata</taxon>
        <taxon>Episquamata</taxon>
        <taxon>Toxicofera</taxon>
        <taxon>Serpentes</taxon>
        <taxon>Colubroidea</taxon>
        <taxon>Viperidae</taxon>
        <taxon>Crotalinae</taxon>
        <taxon>Gloydius</taxon>
    </lineage>
</organism>
<keyword id="KW-0903">Direct protein sequencing</keyword>
<keyword id="KW-1015">Disulfide bond</keyword>
<keyword id="KW-1206">Fibrinogenolytic toxin</keyword>
<keyword id="KW-0325">Glycoprotein</keyword>
<keyword id="KW-1199">Hemostasis impairing toxin</keyword>
<keyword id="KW-0378">Hydrolase</keyword>
<keyword id="KW-0479">Metal-binding</keyword>
<keyword id="KW-0873">Pyrrolidone carboxylic acid</keyword>
<keyword id="KW-0964">Secreted</keyword>
<keyword id="KW-0800">Toxin</keyword>
<keyword id="KW-0862">Zinc</keyword>